<protein>
    <recommendedName>
        <fullName evidence="2">4,5-DOPA dioxygenase extradiol 1</fullName>
        <ecNumber evidence="3">1.13.11.29</ecNumber>
    </recommendedName>
</protein>
<evidence type="ECO:0000250" key="1"/>
<evidence type="ECO:0000303" key="2">
    <source>
    </source>
</evidence>
<evidence type="ECO:0000305" key="3"/>
<evidence type="ECO:0000305" key="4">
    <source>
    </source>
</evidence>
<evidence type="ECO:0000312" key="5">
    <source>
        <dbReference type="EMBL" id="AET43293.1"/>
    </source>
</evidence>
<comment type="function">
    <text evidence="4">Opens the cyclic ring of dihydroxy-phenylalanine (DOPA) between carbons 4 and 5, thus producing an unstable seco-DOPA that rearranges nonenzymatically to betalamic acid.</text>
</comment>
<comment type="catalytic activity">
    <reaction evidence="3">
        <text>L-dopa + O2 = 4-(L-alanin-3-yl)-2-hydroxy-cis,cis-muconate 6-semialdehyde + H(+)</text>
        <dbReference type="Rhea" id="RHEA:21220"/>
        <dbReference type="ChEBI" id="CHEBI:15378"/>
        <dbReference type="ChEBI" id="CHEBI:15379"/>
        <dbReference type="ChEBI" id="CHEBI:57504"/>
        <dbReference type="ChEBI" id="CHEBI:57639"/>
        <dbReference type="EC" id="1.13.11.29"/>
    </reaction>
</comment>
<comment type="cofactor">
    <cofactor evidence="1">
        <name>Zn(2+)</name>
        <dbReference type="ChEBI" id="CHEBI:29105"/>
    </cofactor>
    <text evidence="1">Binds 1 zinc ion per subunit.</text>
</comment>
<comment type="pathway">
    <text evidence="3">Pigment biosynthesis; betalain biosynthesis.</text>
</comment>
<comment type="similarity">
    <text evidence="3">Belongs to the DODA-type extradiol aromatic ring-opening dioxygenase family.</text>
</comment>
<proteinExistence type="evidence at transcript level"/>
<dbReference type="EC" id="1.13.11.29" evidence="3"/>
<dbReference type="EMBL" id="HQ656027">
    <property type="protein sequence ID" value="AET43293.1"/>
    <property type="molecule type" value="mRNA"/>
</dbReference>
<dbReference type="SMR" id="I3PFJ9"/>
<dbReference type="UniPathway" id="UPA00278"/>
<dbReference type="GO" id="GO:0008198">
    <property type="term" value="F:ferrous iron binding"/>
    <property type="evidence" value="ECO:0007669"/>
    <property type="project" value="InterPro"/>
</dbReference>
<dbReference type="GO" id="GO:0050297">
    <property type="term" value="F:stizolobate synthase activity"/>
    <property type="evidence" value="ECO:0007669"/>
    <property type="project" value="UniProtKB-EC"/>
</dbReference>
<dbReference type="GO" id="GO:0008270">
    <property type="term" value="F:zinc ion binding"/>
    <property type="evidence" value="ECO:0007669"/>
    <property type="project" value="InterPro"/>
</dbReference>
<dbReference type="CDD" id="cd07363">
    <property type="entry name" value="45_DOPA_Dioxygenase"/>
    <property type="match status" value="1"/>
</dbReference>
<dbReference type="Gene3D" id="3.40.830.10">
    <property type="entry name" value="LigB-like"/>
    <property type="match status" value="1"/>
</dbReference>
<dbReference type="InterPro" id="IPR014436">
    <property type="entry name" value="Extradiol_dOase_DODA"/>
</dbReference>
<dbReference type="InterPro" id="IPR004183">
    <property type="entry name" value="Xdiol_dOase_suB"/>
</dbReference>
<dbReference type="PANTHER" id="PTHR30096">
    <property type="entry name" value="4,5-DOPA DIOXYGENASE EXTRADIOL-LIKE PROTEIN"/>
    <property type="match status" value="1"/>
</dbReference>
<dbReference type="PANTHER" id="PTHR30096:SF0">
    <property type="entry name" value="4,5-DOPA DIOXYGENASE EXTRADIOL-LIKE PROTEIN"/>
    <property type="match status" value="1"/>
</dbReference>
<dbReference type="Pfam" id="PF02900">
    <property type="entry name" value="LigB"/>
    <property type="match status" value="1"/>
</dbReference>
<dbReference type="PIRSF" id="PIRSF006157">
    <property type="entry name" value="Doxgns_DODA"/>
    <property type="match status" value="1"/>
</dbReference>
<dbReference type="SUPFAM" id="SSF53213">
    <property type="entry name" value="LigB-like"/>
    <property type="match status" value="1"/>
</dbReference>
<gene>
    <name evidence="2" type="primary">DODA1</name>
</gene>
<feature type="chain" id="PRO_0000431982" description="4,5-DOPA dioxygenase extradiol 1">
    <location>
        <begin position="1"/>
        <end position="275"/>
    </location>
</feature>
<feature type="binding site" evidence="1">
    <location>
        <position position="22"/>
    </location>
    <ligand>
        <name>Zn(2+)</name>
        <dbReference type="ChEBI" id="CHEBI:29105"/>
    </ligand>
</feature>
<feature type="binding site" evidence="1">
    <location>
        <position position="60"/>
    </location>
    <ligand>
        <name>Zn(2+)</name>
        <dbReference type="ChEBI" id="CHEBI:29105"/>
    </ligand>
</feature>
<feature type="binding site" evidence="1">
    <location>
        <position position="182"/>
    </location>
    <ligand>
        <name>Zn(2+)</name>
        <dbReference type="ChEBI" id="CHEBI:29105"/>
    </ligand>
</feature>
<feature type="binding site" evidence="1">
    <location>
        <position position="236"/>
    </location>
    <ligand>
        <name>Zn(2+)</name>
        <dbReference type="ChEBI" id="CHEBI:29105"/>
    </ligand>
</feature>
<keyword id="KW-0223">Dioxygenase</keyword>
<keyword id="KW-0479">Metal-binding</keyword>
<keyword id="KW-0560">Oxidoreductase</keyword>
<keyword id="KW-0862">Zinc</keyword>
<sequence>MKMMNGEDANDQMIKESFFITHGNPILTVEDTHPLRPFFETWREKIFSKKPKAILIISGHWETVKPTVNAVHINDTIHDFDDYPAAMYQFKYPAPGEPELARKVEEILKKSGFETAETDQKRGLDHGAWVPLMLMYPEADIPVCQLSVQPHLDGTYHYNLGRALAPLKNDGVLIIGSGSATHPLDETPHYFDGVAPWAAAFDSWLRKALINGRFEEVNIYESKAPNWKLAHPFPEHFYPLHVVLGAAGEKWKAELIHSSWDHGTLCHGSYKFTSA</sequence>
<organism evidence="5">
    <name type="scientific">Beta vulgaris</name>
    <name type="common">Sugar beet</name>
    <dbReference type="NCBI Taxonomy" id="161934"/>
    <lineage>
        <taxon>Eukaryota</taxon>
        <taxon>Viridiplantae</taxon>
        <taxon>Streptophyta</taxon>
        <taxon>Embryophyta</taxon>
        <taxon>Tracheophyta</taxon>
        <taxon>Spermatophyta</taxon>
        <taxon>Magnoliopsida</taxon>
        <taxon>eudicotyledons</taxon>
        <taxon>Gunneridae</taxon>
        <taxon>Pentapetalae</taxon>
        <taxon>Caryophyllales</taxon>
        <taxon>Chenopodiaceae</taxon>
        <taxon>Betoideae</taxon>
        <taxon>Beta</taxon>
    </lineage>
</organism>
<name>DOD1W_BETVU</name>
<accession>I3PFJ9</accession>
<reference key="1">
    <citation type="journal article" date="2012" name="Nat. Genet.">
        <title>The beet R locus encodes a new cytochrome P450 required for red betalain production.</title>
        <authorList>
            <person name="Hatlestad G.J."/>
            <person name="Sunnadeniya R.M."/>
            <person name="Akhavan N.A."/>
            <person name="Gonzalez A."/>
            <person name="Goldman I.L."/>
            <person name="McGrath J.M."/>
            <person name="Lloyd A.M."/>
        </authorList>
    </citation>
    <scope>NUCLEOTIDE SEQUENCE [MRNA]</scope>
    <scope>FUNCTION</scope>
    <source>
        <strain>cv. W357B</strain>
    </source>
</reference>